<keyword id="KW-0472">Membrane</keyword>
<keyword id="KW-1185">Reference proteome</keyword>
<keyword id="KW-0261">Viral envelope protein</keyword>
<keyword id="KW-0946">Virion</keyword>
<gene>
    <name type="ORF">ORF140</name>
</gene>
<protein>
    <recommendedName>
        <fullName>Occlusion-derived virus envelope protein E18</fullName>
        <shortName>ODV-E18</shortName>
    </recommendedName>
</protein>
<accession>O10371</accession>
<name>OE18_NPVOP</name>
<organismHost>
    <name type="scientific">Orgyia pseudotsugata</name>
    <name type="common">Douglas-fir tussock moth</name>
    <dbReference type="NCBI Taxonomy" id="33414"/>
</organismHost>
<dbReference type="EMBL" id="U75930">
    <property type="protein sequence ID" value="AAC59139.1"/>
    <property type="molecule type" value="Genomic_DNA"/>
</dbReference>
<dbReference type="RefSeq" id="NP_046296.1">
    <property type="nucleotide sequence ID" value="NC_001875.2"/>
</dbReference>
<dbReference type="SMR" id="O10371"/>
<dbReference type="KEGG" id="vg:912059"/>
<dbReference type="Proteomes" id="UP000009248">
    <property type="component" value="Genome"/>
</dbReference>
<dbReference type="GO" id="GO:0016020">
    <property type="term" value="C:membrane"/>
    <property type="evidence" value="ECO:0007669"/>
    <property type="project" value="UniProtKB-KW"/>
</dbReference>
<dbReference type="GO" id="GO:0019031">
    <property type="term" value="C:viral envelope"/>
    <property type="evidence" value="ECO:0007669"/>
    <property type="project" value="UniProtKB-KW"/>
</dbReference>
<dbReference type="GO" id="GO:0055036">
    <property type="term" value="C:virion membrane"/>
    <property type="evidence" value="ECO:0007669"/>
    <property type="project" value="UniProtKB-SubCell"/>
</dbReference>
<dbReference type="InterPro" id="IPR019655">
    <property type="entry name" value="Baculo_ODV-E18"/>
</dbReference>
<dbReference type="Pfam" id="PF10717">
    <property type="entry name" value="ODV-E18"/>
    <property type="match status" value="1"/>
</dbReference>
<proteinExistence type="predicted"/>
<sequence length="85" mass="9013">MIYTDPATGATTNTDAAGNNYLNRLTPNTFLIILAVVVIVALIIIFMQSSSNGNNSSSPAAVPQMGFPLNTTMRANPFVATPQRL</sequence>
<reference key="1">
    <citation type="journal article" date="1997" name="Virology">
        <title>The sequence of the Orgyia pseudotsugata multinucleocapsid nuclear polyhedrosis virus genome.</title>
        <authorList>
            <person name="Ahrens C.H."/>
            <person name="Russell R.R."/>
            <person name="Funk C.J."/>
            <person name="Evans J."/>
            <person name="Harwood S."/>
            <person name="Rohrmann G.F."/>
        </authorList>
    </citation>
    <scope>NUCLEOTIDE SEQUENCE [LARGE SCALE GENOMIC DNA]</scope>
</reference>
<feature type="chain" id="PRO_0000132920" description="Occlusion-derived virus envelope protein E18">
    <location>
        <begin position="1"/>
        <end position="85"/>
    </location>
</feature>
<evidence type="ECO:0000305" key="1"/>
<organism>
    <name type="scientific">Orgyia pseudotsugata multicapsid polyhedrosis virus</name>
    <name type="common">OpMNPV</name>
    <dbReference type="NCBI Taxonomy" id="262177"/>
    <lineage>
        <taxon>Viruses</taxon>
        <taxon>Viruses incertae sedis</taxon>
        <taxon>Naldaviricetes</taxon>
        <taxon>Lefavirales</taxon>
        <taxon>Baculoviridae</taxon>
        <taxon>Alphabaculovirus</taxon>
        <taxon>Alphabaculovirus orpseudotsugatae</taxon>
    </lineage>
</organism>
<comment type="function">
    <text>Component of the polyhedra envelope.</text>
</comment>
<comment type="subcellular location">
    <subcellularLocation>
        <location evidence="1">Virion membrane</location>
    </subcellularLocation>
</comment>